<name>RL29_SHEPA</name>
<keyword id="KW-1185">Reference proteome</keyword>
<keyword id="KW-0687">Ribonucleoprotein</keyword>
<keyword id="KW-0689">Ribosomal protein</keyword>
<reference key="1">
    <citation type="submission" date="2007-10" db="EMBL/GenBank/DDBJ databases">
        <title>Complete sequence of Shewanella pealeana ATCC 700345.</title>
        <authorList>
            <consortium name="US DOE Joint Genome Institute"/>
            <person name="Copeland A."/>
            <person name="Lucas S."/>
            <person name="Lapidus A."/>
            <person name="Barry K."/>
            <person name="Glavina del Rio T."/>
            <person name="Dalin E."/>
            <person name="Tice H."/>
            <person name="Pitluck S."/>
            <person name="Chertkov O."/>
            <person name="Brettin T."/>
            <person name="Bruce D."/>
            <person name="Detter J.C."/>
            <person name="Han C."/>
            <person name="Schmutz J."/>
            <person name="Larimer F."/>
            <person name="Land M."/>
            <person name="Hauser L."/>
            <person name="Kyrpides N."/>
            <person name="Kim E."/>
            <person name="Zhao J.-S.Z."/>
            <person name="Manno D."/>
            <person name="Hawari J."/>
            <person name="Richardson P."/>
        </authorList>
    </citation>
    <scope>NUCLEOTIDE SEQUENCE [LARGE SCALE GENOMIC DNA]</scope>
    <source>
        <strain>ATCC 700345 / ANG-SQ1</strain>
    </source>
</reference>
<dbReference type="EMBL" id="CP000851">
    <property type="protein sequence ID" value="ABV85521.1"/>
    <property type="molecule type" value="Genomic_DNA"/>
</dbReference>
<dbReference type="RefSeq" id="WP_012153463.1">
    <property type="nucleotide sequence ID" value="NC_009901.1"/>
</dbReference>
<dbReference type="SMR" id="A8GYY4"/>
<dbReference type="STRING" id="398579.Spea_0192"/>
<dbReference type="KEGG" id="spl:Spea_0192"/>
<dbReference type="eggNOG" id="COG0255">
    <property type="taxonomic scope" value="Bacteria"/>
</dbReference>
<dbReference type="HOGENOM" id="CLU_158491_1_2_6"/>
<dbReference type="OrthoDB" id="9815192at2"/>
<dbReference type="Proteomes" id="UP000002608">
    <property type="component" value="Chromosome"/>
</dbReference>
<dbReference type="GO" id="GO:0022625">
    <property type="term" value="C:cytosolic large ribosomal subunit"/>
    <property type="evidence" value="ECO:0007669"/>
    <property type="project" value="TreeGrafter"/>
</dbReference>
<dbReference type="GO" id="GO:0003735">
    <property type="term" value="F:structural constituent of ribosome"/>
    <property type="evidence" value="ECO:0007669"/>
    <property type="project" value="InterPro"/>
</dbReference>
<dbReference type="GO" id="GO:0006412">
    <property type="term" value="P:translation"/>
    <property type="evidence" value="ECO:0007669"/>
    <property type="project" value="UniProtKB-UniRule"/>
</dbReference>
<dbReference type="CDD" id="cd00427">
    <property type="entry name" value="Ribosomal_L29_HIP"/>
    <property type="match status" value="1"/>
</dbReference>
<dbReference type="FunFam" id="1.10.287.310:FF:000001">
    <property type="entry name" value="50S ribosomal protein L29"/>
    <property type="match status" value="1"/>
</dbReference>
<dbReference type="Gene3D" id="6.10.140.1970">
    <property type="match status" value="1"/>
</dbReference>
<dbReference type="HAMAP" id="MF_00374">
    <property type="entry name" value="Ribosomal_uL29"/>
    <property type="match status" value="1"/>
</dbReference>
<dbReference type="InterPro" id="IPR050063">
    <property type="entry name" value="Ribosomal_protein_uL29"/>
</dbReference>
<dbReference type="InterPro" id="IPR001854">
    <property type="entry name" value="Ribosomal_uL29"/>
</dbReference>
<dbReference type="InterPro" id="IPR018254">
    <property type="entry name" value="Ribosomal_uL29_CS"/>
</dbReference>
<dbReference type="InterPro" id="IPR036049">
    <property type="entry name" value="Ribosomal_uL29_sf"/>
</dbReference>
<dbReference type="NCBIfam" id="TIGR00012">
    <property type="entry name" value="L29"/>
    <property type="match status" value="1"/>
</dbReference>
<dbReference type="PANTHER" id="PTHR10916">
    <property type="entry name" value="60S RIBOSOMAL PROTEIN L35/50S RIBOSOMAL PROTEIN L29"/>
    <property type="match status" value="1"/>
</dbReference>
<dbReference type="PANTHER" id="PTHR10916:SF0">
    <property type="entry name" value="LARGE RIBOSOMAL SUBUNIT PROTEIN UL29C"/>
    <property type="match status" value="1"/>
</dbReference>
<dbReference type="Pfam" id="PF00831">
    <property type="entry name" value="Ribosomal_L29"/>
    <property type="match status" value="1"/>
</dbReference>
<dbReference type="SUPFAM" id="SSF46561">
    <property type="entry name" value="Ribosomal protein L29 (L29p)"/>
    <property type="match status" value="1"/>
</dbReference>
<dbReference type="PROSITE" id="PS00579">
    <property type="entry name" value="RIBOSOMAL_L29"/>
    <property type="match status" value="1"/>
</dbReference>
<sequence length="63" mass="7057">MKASELTAKSVEELNAELLGLLREQFNLRMQHATGQLTQTHQLKIVRRNIARVKTIITSKAGA</sequence>
<comment type="similarity">
    <text evidence="1">Belongs to the universal ribosomal protein uL29 family.</text>
</comment>
<protein>
    <recommendedName>
        <fullName evidence="1">Large ribosomal subunit protein uL29</fullName>
    </recommendedName>
    <alternativeName>
        <fullName evidence="2">50S ribosomal protein L29</fullName>
    </alternativeName>
</protein>
<accession>A8GYY4</accession>
<organism>
    <name type="scientific">Shewanella pealeana (strain ATCC 700345 / ANG-SQ1)</name>
    <dbReference type="NCBI Taxonomy" id="398579"/>
    <lineage>
        <taxon>Bacteria</taxon>
        <taxon>Pseudomonadati</taxon>
        <taxon>Pseudomonadota</taxon>
        <taxon>Gammaproteobacteria</taxon>
        <taxon>Alteromonadales</taxon>
        <taxon>Shewanellaceae</taxon>
        <taxon>Shewanella</taxon>
    </lineage>
</organism>
<evidence type="ECO:0000255" key="1">
    <source>
        <dbReference type="HAMAP-Rule" id="MF_00374"/>
    </source>
</evidence>
<evidence type="ECO:0000305" key="2"/>
<feature type="chain" id="PRO_1000079906" description="Large ribosomal subunit protein uL29">
    <location>
        <begin position="1"/>
        <end position="63"/>
    </location>
</feature>
<gene>
    <name evidence="1" type="primary">rpmC</name>
    <name type="ordered locus">Spea_0192</name>
</gene>
<proteinExistence type="inferred from homology"/>